<accession>B7NLX3</accession>
<gene>
    <name evidence="1" type="primary">citG</name>
    <name type="ordered locus">ECIAI39_0589</name>
</gene>
<reference key="1">
    <citation type="journal article" date="2009" name="PLoS Genet.">
        <title>Organised genome dynamics in the Escherichia coli species results in highly diverse adaptive paths.</title>
        <authorList>
            <person name="Touchon M."/>
            <person name="Hoede C."/>
            <person name="Tenaillon O."/>
            <person name="Barbe V."/>
            <person name="Baeriswyl S."/>
            <person name="Bidet P."/>
            <person name="Bingen E."/>
            <person name="Bonacorsi S."/>
            <person name="Bouchier C."/>
            <person name="Bouvet O."/>
            <person name="Calteau A."/>
            <person name="Chiapello H."/>
            <person name="Clermont O."/>
            <person name="Cruveiller S."/>
            <person name="Danchin A."/>
            <person name="Diard M."/>
            <person name="Dossat C."/>
            <person name="Karoui M.E."/>
            <person name="Frapy E."/>
            <person name="Garry L."/>
            <person name="Ghigo J.M."/>
            <person name="Gilles A.M."/>
            <person name="Johnson J."/>
            <person name="Le Bouguenec C."/>
            <person name="Lescat M."/>
            <person name="Mangenot S."/>
            <person name="Martinez-Jehanne V."/>
            <person name="Matic I."/>
            <person name="Nassif X."/>
            <person name="Oztas S."/>
            <person name="Petit M.A."/>
            <person name="Pichon C."/>
            <person name="Rouy Z."/>
            <person name="Ruf C.S."/>
            <person name="Schneider D."/>
            <person name="Tourret J."/>
            <person name="Vacherie B."/>
            <person name="Vallenet D."/>
            <person name="Medigue C."/>
            <person name="Rocha E.P.C."/>
            <person name="Denamur E."/>
        </authorList>
    </citation>
    <scope>NUCLEOTIDE SEQUENCE [LARGE SCALE GENOMIC DNA]</scope>
    <source>
        <strain>IAI39 / ExPEC</strain>
    </source>
</reference>
<organism>
    <name type="scientific">Escherichia coli O7:K1 (strain IAI39 / ExPEC)</name>
    <dbReference type="NCBI Taxonomy" id="585057"/>
    <lineage>
        <taxon>Bacteria</taxon>
        <taxon>Pseudomonadati</taxon>
        <taxon>Pseudomonadota</taxon>
        <taxon>Gammaproteobacteria</taxon>
        <taxon>Enterobacterales</taxon>
        <taxon>Enterobacteriaceae</taxon>
        <taxon>Escherichia</taxon>
    </lineage>
</organism>
<dbReference type="EC" id="2.4.2.52" evidence="1"/>
<dbReference type="EMBL" id="CU928164">
    <property type="protein sequence ID" value="CAR16726.1"/>
    <property type="molecule type" value="Genomic_DNA"/>
</dbReference>
<dbReference type="RefSeq" id="WP_000062473.1">
    <property type="nucleotide sequence ID" value="NC_011750.1"/>
</dbReference>
<dbReference type="RefSeq" id="YP_002406615.1">
    <property type="nucleotide sequence ID" value="NC_011750.1"/>
</dbReference>
<dbReference type="STRING" id="585057.ECIAI39_0589"/>
<dbReference type="KEGG" id="ect:ECIAI39_0589"/>
<dbReference type="PATRIC" id="fig|585057.6.peg.626"/>
<dbReference type="HOGENOM" id="CLU_056179_1_0_6"/>
<dbReference type="Proteomes" id="UP000000749">
    <property type="component" value="Chromosome"/>
</dbReference>
<dbReference type="GO" id="GO:0005524">
    <property type="term" value="F:ATP binding"/>
    <property type="evidence" value="ECO:0007669"/>
    <property type="project" value="UniProtKB-KW"/>
</dbReference>
<dbReference type="GO" id="GO:0046917">
    <property type="term" value="F:triphosphoribosyl-dephospho-CoA synthase activity"/>
    <property type="evidence" value="ECO:0007669"/>
    <property type="project" value="UniProtKB-UniRule"/>
</dbReference>
<dbReference type="GO" id="GO:0051191">
    <property type="term" value="P:prosthetic group biosynthetic process"/>
    <property type="evidence" value="ECO:0007669"/>
    <property type="project" value="TreeGrafter"/>
</dbReference>
<dbReference type="FunFam" id="1.10.4200.10:FF:000001">
    <property type="entry name" value="Triphosphoribosyl-dephospho-CoA synthase CitG"/>
    <property type="match status" value="1"/>
</dbReference>
<dbReference type="Gene3D" id="1.10.4200.10">
    <property type="entry name" value="Triphosphoribosyl-dephospho-CoA protein"/>
    <property type="match status" value="1"/>
</dbReference>
<dbReference type="HAMAP" id="MF_00397">
    <property type="entry name" value="CitG"/>
    <property type="match status" value="1"/>
</dbReference>
<dbReference type="InterPro" id="IPR002736">
    <property type="entry name" value="CitG"/>
</dbReference>
<dbReference type="InterPro" id="IPR017551">
    <property type="entry name" value="TriPribosyl-deP-CoA_syn_CitG"/>
</dbReference>
<dbReference type="NCBIfam" id="TIGR03125">
    <property type="entry name" value="citrate_citG"/>
    <property type="match status" value="1"/>
</dbReference>
<dbReference type="NCBIfam" id="NF007503">
    <property type="entry name" value="PRK10096.1"/>
    <property type="match status" value="1"/>
</dbReference>
<dbReference type="PANTHER" id="PTHR30201:SF2">
    <property type="entry name" value="2-(5''-TRIPHOSPHORIBOSYL)-3'-DEPHOSPHOCOENZYME-A SYNTHASE"/>
    <property type="match status" value="1"/>
</dbReference>
<dbReference type="PANTHER" id="PTHR30201">
    <property type="entry name" value="TRIPHOSPHORIBOSYL-DEPHOSPHO-COA SYNTHASE"/>
    <property type="match status" value="1"/>
</dbReference>
<dbReference type="Pfam" id="PF01874">
    <property type="entry name" value="CitG"/>
    <property type="match status" value="1"/>
</dbReference>
<name>CITG_ECO7I</name>
<feature type="chain" id="PRO_1000123220" description="2-(5''-triphosphoribosyl)-3'-dephosphocoenzyme-A synthase">
    <location>
        <begin position="1"/>
        <end position="292"/>
    </location>
</feature>
<sequence length="292" mass="31624">MSMPATSTKTTKLATSLIDEYALLGWRAMLTEVNLSPKPGLVDRINCGAHKDMALEDFHRSALAIQGWLPRFIEFGACSAEMAPEAVLNGLRPIGMACEGDMFRATAGVNTHKGSIFSLGLLCAAIGRLLQLNQPVTPTTVCSTAASFCRGLTDRELRTNNSQRTAGQRLYQQLGLTGARGEAEAGYPLVINHALPHYLTLLDQGLDPELALLDTLLLLMATNGDTNVASRGGEGGLRWLQREAQTLLNNGGIRTPADLDYLRQFDRECIERNLSPGGSADLLILTWFLAQI</sequence>
<protein>
    <recommendedName>
        <fullName evidence="1">2-(5''-triphosphoribosyl)-3'-dephosphocoenzyme-A synthase</fullName>
        <shortName evidence="1">2-(5''-triphosphoribosyl)-3'-dephospho-CoA synthase</shortName>
        <ecNumber evidence="1">2.4.2.52</ecNumber>
    </recommendedName>
</protein>
<keyword id="KW-0067">ATP-binding</keyword>
<keyword id="KW-0547">Nucleotide-binding</keyword>
<keyword id="KW-0808">Transferase</keyword>
<comment type="function">
    <text evidence="1">Catalyzes the formation of 2-(5''-triphosphoribosyl)-3'-dephosphocoenzyme-A, the precursor of the prosthetic group of the holo-acyl carrier protein (gamma chain) of citrate lyase, from ATP and dephospho-CoA.</text>
</comment>
<comment type="catalytic activity">
    <reaction evidence="1">
        <text>3'-dephospho-CoA + ATP = 2'-(5''-triphospho-alpha-D-ribosyl)-3'-dephospho-CoA + adenine</text>
        <dbReference type="Rhea" id="RHEA:15117"/>
        <dbReference type="ChEBI" id="CHEBI:16708"/>
        <dbReference type="ChEBI" id="CHEBI:30616"/>
        <dbReference type="ChEBI" id="CHEBI:57328"/>
        <dbReference type="ChEBI" id="CHEBI:61378"/>
        <dbReference type="EC" id="2.4.2.52"/>
    </reaction>
</comment>
<comment type="similarity">
    <text evidence="1">Belongs to the CitG/MdcB family.</text>
</comment>
<proteinExistence type="inferred from homology"/>
<evidence type="ECO:0000255" key="1">
    <source>
        <dbReference type="HAMAP-Rule" id="MF_00397"/>
    </source>
</evidence>